<gene>
    <name type="primary">RAMP2</name>
</gene>
<feature type="signal peptide" evidence="3">
    <location>
        <begin position="1"/>
        <end position="24"/>
    </location>
</feature>
<feature type="chain" id="PRO_0000030171" description="Receptor activity-modifying protein 2">
    <location>
        <begin position="25"/>
        <end position="157"/>
    </location>
</feature>
<feature type="topological domain" description="Extracellular" evidence="2">
    <location>
        <begin position="25"/>
        <end position="125"/>
    </location>
</feature>
<feature type="transmembrane region" description="Helical" evidence="1">
    <location>
        <begin position="126"/>
        <end position="147"/>
    </location>
</feature>
<feature type="topological domain" description="Cytoplasmic" evidence="2">
    <location>
        <begin position="148"/>
        <end position="157"/>
    </location>
</feature>
<feature type="glycosylation site" description="N-linked (GlcNAc...) asparagine" evidence="2">
    <location>
        <position position="67"/>
    </location>
</feature>
<feature type="glycosylation site" description="N-linked (GlcNAc...) asparagine" evidence="2">
    <location>
        <position position="112"/>
    </location>
</feature>
<feature type="disulfide bond" evidence="1">
    <location>
        <begin position="50"/>
        <end position="81"/>
    </location>
</feature>
<feature type="disulfide bond" evidence="1">
    <location>
        <begin position="66"/>
        <end position="113"/>
    </location>
</feature>
<evidence type="ECO:0000250" key="1">
    <source>
        <dbReference type="UniProtKB" id="O60895"/>
    </source>
</evidence>
<evidence type="ECO:0000255" key="2"/>
<evidence type="ECO:0000305" key="3"/>
<name>RAMP2_CAVPO</name>
<organism>
    <name type="scientific">Cavia porcellus</name>
    <name type="common">Guinea pig</name>
    <dbReference type="NCBI Taxonomy" id="10141"/>
    <lineage>
        <taxon>Eukaryota</taxon>
        <taxon>Metazoa</taxon>
        <taxon>Chordata</taxon>
        <taxon>Craniata</taxon>
        <taxon>Vertebrata</taxon>
        <taxon>Euteleostomi</taxon>
        <taxon>Mammalia</taxon>
        <taxon>Eutheria</taxon>
        <taxon>Euarchontoglires</taxon>
        <taxon>Glires</taxon>
        <taxon>Rodentia</taxon>
        <taxon>Hystricomorpha</taxon>
        <taxon>Caviidae</taxon>
        <taxon>Cavia</taxon>
    </lineage>
</organism>
<dbReference type="EMBL" id="AF484220">
    <property type="protein sequence ID" value="AAL91559.1"/>
    <property type="molecule type" value="mRNA"/>
</dbReference>
<dbReference type="RefSeq" id="NP_001166481.1">
    <property type="nucleotide sequence ID" value="NM_001173010.1"/>
</dbReference>
<dbReference type="SMR" id="Q8R4C5"/>
<dbReference type="FunCoup" id="Q8R4C5">
    <property type="interactions" value="36"/>
</dbReference>
<dbReference type="STRING" id="10141.ENSCPOP00000029954"/>
<dbReference type="GlyCosmos" id="Q8R4C5">
    <property type="glycosylation" value="2 sites, No reported glycans"/>
</dbReference>
<dbReference type="GeneID" id="100135611"/>
<dbReference type="KEGG" id="cpoc:100135611"/>
<dbReference type="CTD" id="10266"/>
<dbReference type="eggNOG" id="ENOG502S5WC">
    <property type="taxonomic scope" value="Eukaryota"/>
</dbReference>
<dbReference type="InParanoid" id="Q8R4C5"/>
<dbReference type="OrthoDB" id="9416539at2759"/>
<dbReference type="Proteomes" id="UP000005447">
    <property type="component" value="Unassembled WGS sequence"/>
</dbReference>
<dbReference type="GO" id="GO:0009986">
    <property type="term" value="C:cell surface"/>
    <property type="evidence" value="ECO:0000250"/>
    <property type="project" value="UniProtKB"/>
</dbReference>
<dbReference type="GO" id="GO:0005737">
    <property type="term" value="C:cytoplasm"/>
    <property type="evidence" value="ECO:0000250"/>
    <property type="project" value="UniProtKB"/>
</dbReference>
<dbReference type="GO" id="GO:0005886">
    <property type="term" value="C:plasma membrane"/>
    <property type="evidence" value="ECO:0007669"/>
    <property type="project" value="UniProtKB-SubCell"/>
</dbReference>
<dbReference type="GO" id="GO:0043235">
    <property type="term" value="C:receptor complex"/>
    <property type="evidence" value="ECO:0000250"/>
    <property type="project" value="UniProtKB"/>
</dbReference>
<dbReference type="GO" id="GO:0015026">
    <property type="term" value="F:coreceptor activity"/>
    <property type="evidence" value="ECO:0000250"/>
    <property type="project" value="UniProtKB"/>
</dbReference>
<dbReference type="GO" id="GO:0034333">
    <property type="term" value="P:adherens junction assembly"/>
    <property type="evidence" value="ECO:0000250"/>
    <property type="project" value="UniProtKB"/>
</dbReference>
<dbReference type="GO" id="GO:0001525">
    <property type="term" value="P:angiogenesis"/>
    <property type="evidence" value="ECO:0000250"/>
    <property type="project" value="UniProtKB"/>
</dbReference>
<dbReference type="GO" id="GO:0070831">
    <property type="term" value="P:basement membrane assembly"/>
    <property type="evidence" value="ECO:0000250"/>
    <property type="project" value="UniProtKB"/>
</dbReference>
<dbReference type="GO" id="GO:0070830">
    <property type="term" value="P:bicellular tight junction assembly"/>
    <property type="evidence" value="ECO:0000250"/>
    <property type="project" value="UniProtKB"/>
</dbReference>
<dbReference type="GO" id="GO:0006816">
    <property type="term" value="P:calcium ion transport"/>
    <property type="evidence" value="ECO:0000250"/>
    <property type="project" value="UniProtKB"/>
</dbReference>
<dbReference type="GO" id="GO:0032870">
    <property type="term" value="P:cellular response to hormone stimulus"/>
    <property type="evidence" value="ECO:0007669"/>
    <property type="project" value="TreeGrafter"/>
</dbReference>
<dbReference type="GO" id="GO:0035924">
    <property type="term" value="P:cellular response to vascular endothelial growth factor stimulus"/>
    <property type="evidence" value="ECO:0000250"/>
    <property type="project" value="UniProtKB"/>
</dbReference>
<dbReference type="GO" id="GO:0007186">
    <property type="term" value="P:G protein-coupled receptor signaling pathway"/>
    <property type="evidence" value="ECO:0007669"/>
    <property type="project" value="TreeGrafter"/>
</dbReference>
<dbReference type="GO" id="GO:0007507">
    <property type="term" value="P:heart development"/>
    <property type="evidence" value="ECO:0000250"/>
    <property type="project" value="UniProtKB"/>
</dbReference>
<dbReference type="GO" id="GO:0006886">
    <property type="term" value="P:intracellular protein transport"/>
    <property type="evidence" value="ECO:0007669"/>
    <property type="project" value="InterPro"/>
</dbReference>
<dbReference type="GO" id="GO:2000352">
    <property type="term" value="P:negative regulation of endothelial cell apoptotic process"/>
    <property type="evidence" value="ECO:0000250"/>
    <property type="project" value="UniProtKB"/>
</dbReference>
<dbReference type="GO" id="GO:0043116">
    <property type="term" value="P:negative regulation of vascular permeability"/>
    <property type="evidence" value="ECO:0000250"/>
    <property type="project" value="UniProtKB"/>
</dbReference>
<dbReference type="GO" id="GO:0045766">
    <property type="term" value="P:positive regulation of angiogenesis"/>
    <property type="evidence" value="ECO:0000250"/>
    <property type="project" value="UniProtKB"/>
</dbReference>
<dbReference type="GO" id="GO:0010628">
    <property type="term" value="P:positive regulation of gene expression"/>
    <property type="evidence" value="ECO:0000250"/>
    <property type="project" value="UniProtKB"/>
</dbReference>
<dbReference type="GO" id="GO:0072659">
    <property type="term" value="P:protein localization to plasma membrane"/>
    <property type="evidence" value="ECO:0000250"/>
    <property type="project" value="UniProtKB"/>
</dbReference>
<dbReference type="GO" id="GO:0015031">
    <property type="term" value="P:protein transport"/>
    <property type="evidence" value="ECO:0000250"/>
    <property type="project" value="UniProtKB"/>
</dbReference>
<dbReference type="GO" id="GO:0031623">
    <property type="term" value="P:receptor internalization"/>
    <property type="evidence" value="ECO:0000250"/>
    <property type="project" value="UniProtKB"/>
</dbReference>
<dbReference type="GO" id="GO:0008217">
    <property type="term" value="P:regulation of blood pressure"/>
    <property type="evidence" value="ECO:0000250"/>
    <property type="project" value="UniProtKB"/>
</dbReference>
<dbReference type="GO" id="GO:0008277">
    <property type="term" value="P:regulation of G protein-coupled receptor signaling pathway"/>
    <property type="evidence" value="ECO:0007669"/>
    <property type="project" value="InterPro"/>
</dbReference>
<dbReference type="GO" id="GO:0002040">
    <property type="term" value="P:sprouting angiogenesis"/>
    <property type="evidence" value="ECO:0000250"/>
    <property type="project" value="UniProtKB"/>
</dbReference>
<dbReference type="GO" id="GO:0097084">
    <property type="term" value="P:vascular associated smooth muscle cell development"/>
    <property type="evidence" value="ECO:0000250"/>
    <property type="project" value="UniProtKB"/>
</dbReference>
<dbReference type="GO" id="GO:0001570">
    <property type="term" value="P:vasculogenesis"/>
    <property type="evidence" value="ECO:0000250"/>
    <property type="project" value="UniProtKB"/>
</dbReference>
<dbReference type="FunFam" id="1.10.150.510:FF:000003">
    <property type="entry name" value="Receptor activity-modifying protein 2"/>
    <property type="match status" value="1"/>
</dbReference>
<dbReference type="Gene3D" id="1.10.150.510">
    <property type="entry name" value="Receptor activity modifying family"/>
    <property type="match status" value="1"/>
</dbReference>
<dbReference type="InterPro" id="IPR006985">
    <property type="entry name" value="RAMP"/>
</dbReference>
<dbReference type="InterPro" id="IPR038126">
    <property type="entry name" value="RAMP_sf"/>
</dbReference>
<dbReference type="PANTHER" id="PTHR14076">
    <property type="entry name" value="RECEPTOR ACTIVITY MODIFYING PROTEIN RAMP"/>
    <property type="match status" value="1"/>
</dbReference>
<dbReference type="PANTHER" id="PTHR14076:SF9">
    <property type="entry name" value="RECEPTOR ACTIVITY-MODIFYING PROTEIN 2"/>
    <property type="match status" value="1"/>
</dbReference>
<dbReference type="Pfam" id="PF04901">
    <property type="entry name" value="RAMP"/>
    <property type="match status" value="1"/>
</dbReference>
<proteinExistence type="evidence at transcript level"/>
<protein>
    <recommendedName>
        <fullName>Receptor activity-modifying protein 2</fullName>
    </recommendedName>
</protein>
<accession>Q8R4C5</accession>
<comment type="function">
    <text evidence="1">Accessory protein that interacts with and modulates the function of G-protein coupled receptors including calcitonin gene-related peptide type 1 receptor (CALCRL) and calcitonin receptor (CALCR). Required for the transport of CALCRL to the plasma membrane. Together with CALCRL, form a receptor complex for adrenomedullin/ADM. Together with CALCR, act as a receptor complex for calcitonin/CT/CALC. Together with CALCR, also act as a receptor complex for amylin/IAPP.</text>
</comment>
<comment type="subunit">
    <text evidence="1">Heterodimer of CALCRL and RAMP2; the interaction forms the receptor complex for adrenomedullin/ADM. Heterodimer of CALCR and RAMP2; interaction forms the AMYR2 receptor complex for calcitonin/CALC and amylin/IAPP.</text>
</comment>
<comment type="subcellular location">
    <subcellularLocation>
        <location evidence="1">Cell membrane</location>
        <topology evidence="1">Single-pass type I membrane protein</topology>
    </subcellularLocation>
</comment>
<comment type="similarity">
    <text evidence="3">Belongs to the RAMP family.</text>
</comment>
<keyword id="KW-1003">Cell membrane</keyword>
<keyword id="KW-1015">Disulfide bond</keyword>
<keyword id="KW-0325">Glycoprotein</keyword>
<keyword id="KW-0472">Membrane</keyword>
<keyword id="KW-0675">Receptor</keyword>
<keyword id="KW-1185">Reference proteome</keyword>
<keyword id="KW-0732">Signal</keyword>
<keyword id="KW-0812">Transmembrane</keyword>
<keyword id="KW-1133">Transmembrane helix</keyword>
<keyword id="KW-0813">Transport</keyword>
<sequence length="157" mass="17749">MAARLRPLLALLALAALCPQETLAQPLPTTDTWKSEGQVVDSYEASAQLCWADYREHMDLLEKDWCNWTVISRPYSALRDCLEVEAEVFSLGFPNPLAERVIFETHQLHFSNCSLEQPTLCDPPEDVLLAMIIAPICLIPFFVTLVVWRSKGTELKT</sequence>
<reference key="1">
    <citation type="submission" date="2002-02" db="EMBL/GenBank/DDBJ databases">
        <title>Cloning and sequencing of guinea pig amylin, calcitonin, CGRP and adrenomedullin receptor subunits.</title>
        <authorList>
            <person name="Derst C."/>
            <person name="Preisig-Mueller R."/>
            <person name="Daut J."/>
        </authorList>
    </citation>
    <scope>NUCLEOTIDE SEQUENCE [MRNA]</scope>
</reference>